<evidence type="ECO:0000250" key="1"/>
<evidence type="ECO:0000255" key="2">
    <source>
        <dbReference type="PROSITE-ProRule" id="PRU00541"/>
    </source>
</evidence>
<evidence type="ECO:0000255" key="3">
    <source>
        <dbReference type="PROSITE-ProRule" id="PRU00542"/>
    </source>
</evidence>
<evidence type="ECO:0000256" key="4">
    <source>
        <dbReference type="SAM" id="MobiDB-lite"/>
    </source>
</evidence>
<evidence type="ECO:0000305" key="5"/>
<name>RH50_ARATH</name>
<dbReference type="EC" id="3.6.4.13"/>
<dbReference type="EMBL" id="AJ296275">
    <property type="protein sequence ID" value="CAC82719.1"/>
    <property type="molecule type" value="mRNA"/>
</dbReference>
<dbReference type="EMBL" id="AC016827">
    <property type="protein sequence ID" value="AAF27002.1"/>
    <property type="molecule type" value="Genomic_DNA"/>
</dbReference>
<dbReference type="EMBL" id="CP002686">
    <property type="protein sequence ID" value="AEE74483.1"/>
    <property type="molecule type" value="Genomic_DNA"/>
</dbReference>
<dbReference type="EMBL" id="AY048260">
    <property type="protein sequence ID" value="AAK82522.1"/>
    <property type="molecule type" value="mRNA"/>
</dbReference>
<dbReference type="EMBL" id="AY113064">
    <property type="protein sequence ID" value="AAM47372.1"/>
    <property type="molecule type" value="mRNA"/>
</dbReference>
<dbReference type="EMBL" id="BT002520">
    <property type="protein sequence ID" value="AAO00880.1"/>
    <property type="molecule type" value="mRNA"/>
</dbReference>
<dbReference type="RefSeq" id="NP_187354.1">
    <property type="nucleotide sequence ID" value="NM_111578.2"/>
</dbReference>
<dbReference type="SMR" id="Q8GUG7"/>
<dbReference type="BioGRID" id="5218">
    <property type="interactions" value="3"/>
</dbReference>
<dbReference type="FunCoup" id="Q8GUG7">
    <property type="interactions" value="1106"/>
</dbReference>
<dbReference type="IntAct" id="Q8GUG7">
    <property type="interactions" value="5"/>
</dbReference>
<dbReference type="STRING" id="3702.Q8GUG7"/>
<dbReference type="PaxDb" id="3702-AT3G06980.1"/>
<dbReference type="ProteomicsDB" id="236170"/>
<dbReference type="EnsemblPlants" id="AT3G06980.1">
    <property type="protein sequence ID" value="AT3G06980.1"/>
    <property type="gene ID" value="AT3G06980"/>
</dbReference>
<dbReference type="GeneID" id="819883"/>
<dbReference type="Gramene" id="AT3G06980.1">
    <property type="protein sequence ID" value="AT3G06980.1"/>
    <property type="gene ID" value="AT3G06980"/>
</dbReference>
<dbReference type="KEGG" id="ath:AT3G06980"/>
<dbReference type="Araport" id="AT3G06980"/>
<dbReference type="TAIR" id="AT3G06980"/>
<dbReference type="eggNOG" id="KOG0331">
    <property type="taxonomic scope" value="Eukaryota"/>
</dbReference>
<dbReference type="HOGENOM" id="CLU_003041_24_2_1"/>
<dbReference type="InParanoid" id="Q8GUG7"/>
<dbReference type="OMA" id="RDMEDWR"/>
<dbReference type="OrthoDB" id="10256233at2759"/>
<dbReference type="PhylomeDB" id="Q8GUG7"/>
<dbReference type="PRO" id="PR:Q8GUG7"/>
<dbReference type="Proteomes" id="UP000006548">
    <property type="component" value="Chromosome 3"/>
</dbReference>
<dbReference type="ExpressionAtlas" id="Q8GUG7">
    <property type="expression patterns" value="baseline and differential"/>
</dbReference>
<dbReference type="GO" id="GO:0009507">
    <property type="term" value="C:chloroplast"/>
    <property type="evidence" value="ECO:0007005"/>
    <property type="project" value="TAIR"/>
</dbReference>
<dbReference type="GO" id="GO:0005524">
    <property type="term" value="F:ATP binding"/>
    <property type="evidence" value="ECO:0007669"/>
    <property type="project" value="UniProtKB-KW"/>
</dbReference>
<dbReference type="GO" id="GO:0016887">
    <property type="term" value="F:ATP hydrolysis activity"/>
    <property type="evidence" value="ECO:0007669"/>
    <property type="project" value="RHEA"/>
</dbReference>
<dbReference type="GO" id="GO:0003729">
    <property type="term" value="F:mRNA binding"/>
    <property type="evidence" value="ECO:0000314"/>
    <property type="project" value="TAIR"/>
</dbReference>
<dbReference type="GO" id="GO:0003724">
    <property type="term" value="F:RNA helicase activity"/>
    <property type="evidence" value="ECO:0000250"/>
    <property type="project" value="UniProtKB"/>
</dbReference>
<dbReference type="GO" id="GO:0006968">
    <property type="term" value="P:cellular defense response"/>
    <property type="evidence" value="ECO:0000250"/>
    <property type="project" value="UniProtKB"/>
</dbReference>
<dbReference type="GO" id="GO:0071369">
    <property type="term" value="P:cellular response to ethylene stimulus"/>
    <property type="evidence" value="ECO:0007669"/>
    <property type="project" value="EnsemblPlants"/>
</dbReference>
<dbReference type="GO" id="GO:0071395">
    <property type="term" value="P:cellular response to jasmonic acid stimulus"/>
    <property type="evidence" value="ECO:0007669"/>
    <property type="project" value="EnsemblPlants"/>
</dbReference>
<dbReference type="GO" id="GO:0071446">
    <property type="term" value="P:cellular response to salicylic acid stimulus"/>
    <property type="evidence" value="ECO:0007669"/>
    <property type="project" value="EnsemblPlants"/>
</dbReference>
<dbReference type="GO" id="GO:0050832">
    <property type="term" value="P:defense response to fungus"/>
    <property type="evidence" value="ECO:0007669"/>
    <property type="project" value="EnsemblPlants"/>
</dbReference>
<dbReference type="CDD" id="cd00268">
    <property type="entry name" value="DEADc"/>
    <property type="match status" value="1"/>
</dbReference>
<dbReference type="CDD" id="cd18787">
    <property type="entry name" value="SF2_C_DEAD"/>
    <property type="match status" value="1"/>
</dbReference>
<dbReference type="FunFam" id="3.40.50.300:FF:001942">
    <property type="entry name" value="DEAD-box ATP-dependent RNA helicase 50"/>
    <property type="match status" value="1"/>
</dbReference>
<dbReference type="Gene3D" id="3.40.50.300">
    <property type="entry name" value="P-loop containing nucleotide triphosphate hydrolases"/>
    <property type="match status" value="2"/>
</dbReference>
<dbReference type="InterPro" id="IPR011545">
    <property type="entry name" value="DEAD/DEAH_box_helicase_dom"/>
</dbReference>
<dbReference type="InterPro" id="IPR014001">
    <property type="entry name" value="Helicase_ATP-bd"/>
</dbReference>
<dbReference type="InterPro" id="IPR001650">
    <property type="entry name" value="Helicase_C-like"/>
</dbReference>
<dbReference type="InterPro" id="IPR027417">
    <property type="entry name" value="P-loop_NTPase"/>
</dbReference>
<dbReference type="InterPro" id="IPR014014">
    <property type="entry name" value="RNA_helicase_DEAD_Q_motif"/>
</dbReference>
<dbReference type="PANTHER" id="PTHR47960">
    <property type="entry name" value="DEAD-BOX ATP-DEPENDENT RNA HELICASE 50"/>
    <property type="match status" value="1"/>
</dbReference>
<dbReference type="Pfam" id="PF00270">
    <property type="entry name" value="DEAD"/>
    <property type="match status" value="1"/>
</dbReference>
<dbReference type="Pfam" id="PF00271">
    <property type="entry name" value="Helicase_C"/>
    <property type="match status" value="1"/>
</dbReference>
<dbReference type="SMART" id="SM00487">
    <property type="entry name" value="DEXDc"/>
    <property type="match status" value="1"/>
</dbReference>
<dbReference type="SMART" id="SM00490">
    <property type="entry name" value="HELICc"/>
    <property type="match status" value="1"/>
</dbReference>
<dbReference type="SUPFAM" id="SSF52540">
    <property type="entry name" value="P-loop containing nucleoside triphosphate hydrolases"/>
    <property type="match status" value="1"/>
</dbReference>
<dbReference type="PROSITE" id="PS51192">
    <property type="entry name" value="HELICASE_ATP_BIND_1"/>
    <property type="match status" value="1"/>
</dbReference>
<dbReference type="PROSITE" id="PS51194">
    <property type="entry name" value="HELICASE_CTER"/>
    <property type="match status" value="1"/>
</dbReference>
<dbReference type="PROSITE" id="PS51195">
    <property type="entry name" value="Q_MOTIF"/>
    <property type="match status" value="1"/>
</dbReference>
<organism>
    <name type="scientific">Arabidopsis thaliana</name>
    <name type="common">Mouse-ear cress</name>
    <dbReference type="NCBI Taxonomy" id="3702"/>
    <lineage>
        <taxon>Eukaryota</taxon>
        <taxon>Viridiplantae</taxon>
        <taxon>Streptophyta</taxon>
        <taxon>Embryophyta</taxon>
        <taxon>Tracheophyta</taxon>
        <taxon>Spermatophyta</taxon>
        <taxon>Magnoliopsida</taxon>
        <taxon>eudicotyledons</taxon>
        <taxon>Gunneridae</taxon>
        <taxon>Pentapetalae</taxon>
        <taxon>rosids</taxon>
        <taxon>malvids</taxon>
        <taxon>Brassicales</taxon>
        <taxon>Brassicaceae</taxon>
        <taxon>Camelineae</taxon>
        <taxon>Arabidopsis</taxon>
    </lineage>
</organism>
<comment type="function">
    <text evidence="1">Probably involved in resistance to biotic and abiotic stresses.</text>
</comment>
<comment type="catalytic activity">
    <reaction>
        <text>ATP + H2O = ADP + phosphate + H(+)</text>
        <dbReference type="Rhea" id="RHEA:13065"/>
        <dbReference type="ChEBI" id="CHEBI:15377"/>
        <dbReference type="ChEBI" id="CHEBI:15378"/>
        <dbReference type="ChEBI" id="CHEBI:30616"/>
        <dbReference type="ChEBI" id="CHEBI:43474"/>
        <dbReference type="ChEBI" id="CHEBI:456216"/>
        <dbReference type="EC" id="3.6.4.13"/>
    </reaction>
</comment>
<comment type="domain">
    <text>The Q motif is unique to and characteristic of the DEAD box family of RNA helicases and controls ATP binding and hydrolysis.</text>
</comment>
<comment type="similarity">
    <text evidence="5">Belongs to the DEAD box helicase family.</text>
</comment>
<proteinExistence type="evidence at transcript level"/>
<reference key="1">
    <citation type="submission" date="2000-10" db="EMBL/GenBank/DDBJ databases">
        <title>DEAD box RNA-helicase expression.</title>
        <authorList>
            <person name="Li J."/>
            <person name="Dodeman C."/>
            <person name="Bergounioux C."/>
        </authorList>
    </citation>
    <scope>NUCLEOTIDE SEQUENCE [MRNA]</scope>
    <source>
        <strain>cv. Columbia</strain>
    </source>
</reference>
<reference key="2">
    <citation type="journal article" date="2000" name="Nature">
        <title>Sequence and analysis of chromosome 3 of the plant Arabidopsis thaliana.</title>
        <authorList>
            <person name="Salanoubat M."/>
            <person name="Lemcke K."/>
            <person name="Rieger M."/>
            <person name="Ansorge W."/>
            <person name="Unseld M."/>
            <person name="Fartmann B."/>
            <person name="Valle G."/>
            <person name="Bloecker H."/>
            <person name="Perez-Alonso M."/>
            <person name="Obermaier B."/>
            <person name="Delseny M."/>
            <person name="Boutry M."/>
            <person name="Grivell L.A."/>
            <person name="Mache R."/>
            <person name="Puigdomenech P."/>
            <person name="De Simone V."/>
            <person name="Choisne N."/>
            <person name="Artiguenave F."/>
            <person name="Robert C."/>
            <person name="Brottier P."/>
            <person name="Wincker P."/>
            <person name="Cattolico L."/>
            <person name="Weissenbach J."/>
            <person name="Saurin W."/>
            <person name="Quetier F."/>
            <person name="Schaefer M."/>
            <person name="Mueller-Auer S."/>
            <person name="Gabel C."/>
            <person name="Fuchs M."/>
            <person name="Benes V."/>
            <person name="Wurmbach E."/>
            <person name="Drzonek H."/>
            <person name="Erfle H."/>
            <person name="Jordan N."/>
            <person name="Bangert S."/>
            <person name="Wiedelmann R."/>
            <person name="Kranz H."/>
            <person name="Voss H."/>
            <person name="Holland R."/>
            <person name="Brandt P."/>
            <person name="Nyakatura G."/>
            <person name="Vezzi A."/>
            <person name="D'Angelo M."/>
            <person name="Pallavicini A."/>
            <person name="Toppo S."/>
            <person name="Simionati B."/>
            <person name="Conrad A."/>
            <person name="Hornischer K."/>
            <person name="Kauer G."/>
            <person name="Loehnert T.-H."/>
            <person name="Nordsiek G."/>
            <person name="Reichelt J."/>
            <person name="Scharfe M."/>
            <person name="Schoen O."/>
            <person name="Bargues M."/>
            <person name="Terol J."/>
            <person name="Climent J."/>
            <person name="Navarro P."/>
            <person name="Collado C."/>
            <person name="Perez-Perez A."/>
            <person name="Ottenwaelder B."/>
            <person name="Duchemin D."/>
            <person name="Cooke R."/>
            <person name="Laudie M."/>
            <person name="Berger-Llauro C."/>
            <person name="Purnelle B."/>
            <person name="Masuy D."/>
            <person name="de Haan M."/>
            <person name="Maarse A.C."/>
            <person name="Alcaraz J.-P."/>
            <person name="Cottet A."/>
            <person name="Casacuberta E."/>
            <person name="Monfort A."/>
            <person name="Argiriou A."/>
            <person name="Flores M."/>
            <person name="Liguori R."/>
            <person name="Vitale D."/>
            <person name="Mannhaupt G."/>
            <person name="Haase D."/>
            <person name="Schoof H."/>
            <person name="Rudd S."/>
            <person name="Zaccaria P."/>
            <person name="Mewes H.-W."/>
            <person name="Mayer K.F.X."/>
            <person name="Kaul S."/>
            <person name="Town C.D."/>
            <person name="Koo H.L."/>
            <person name="Tallon L.J."/>
            <person name="Jenkins J."/>
            <person name="Rooney T."/>
            <person name="Rizzo M."/>
            <person name="Walts A."/>
            <person name="Utterback T."/>
            <person name="Fujii C.Y."/>
            <person name="Shea T.P."/>
            <person name="Creasy T.H."/>
            <person name="Haas B."/>
            <person name="Maiti R."/>
            <person name="Wu D."/>
            <person name="Peterson J."/>
            <person name="Van Aken S."/>
            <person name="Pai G."/>
            <person name="Militscher J."/>
            <person name="Sellers P."/>
            <person name="Gill J.E."/>
            <person name="Feldblyum T.V."/>
            <person name="Preuss D."/>
            <person name="Lin X."/>
            <person name="Nierman W.C."/>
            <person name="Salzberg S.L."/>
            <person name="White O."/>
            <person name="Venter J.C."/>
            <person name="Fraser C.M."/>
            <person name="Kaneko T."/>
            <person name="Nakamura Y."/>
            <person name="Sato S."/>
            <person name="Kato T."/>
            <person name="Asamizu E."/>
            <person name="Sasamoto S."/>
            <person name="Kimura T."/>
            <person name="Idesawa K."/>
            <person name="Kawashima K."/>
            <person name="Kishida Y."/>
            <person name="Kiyokawa C."/>
            <person name="Kohara M."/>
            <person name="Matsumoto M."/>
            <person name="Matsuno A."/>
            <person name="Muraki A."/>
            <person name="Nakayama S."/>
            <person name="Nakazaki N."/>
            <person name="Shinpo S."/>
            <person name="Takeuchi C."/>
            <person name="Wada T."/>
            <person name="Watanabe A."/>
            <person name="Yamada M."/>
            <person name="Yasuda M."/>
            <person name="Tabata S."/>
        </authorList>
    </citation>
    <scope>NUCLEOTIDE SEQUENCE [LARGE SCALE GENOMIC DNA]</scope>
    <source>
        <strain>cv. Columbia</strain>
    </source>
</reference>
<reference key="3">
    <citation type="journal article" date="2017" name="Plant J.">
        <title>Araport11: a complete reannotation of the Arabidopsis thaliana reference genome.</title>
        <authorList>
            <person name="Cheng C.Y."/>
            <person name="Krishnakumar V."/>
            <person name="Chan A.P."/>
            <person name="Thibaud-Nissen F."/>
            <person name="Schobel S."/>
            <person name="Town C.D."/>
        </authorList>
    </citation>
    <scope>GENOME REANNOTATION</scope>
    <source>
        <strain>cv. Columbia</strain>
    </source>
</reference>
<reference key="4">
    <citation type="journal article" date="2003" name="Science">
        <title>Empirical analysis of transcriptional activity in the Arabidopsis genome.</title>
        <authorList>
            <person name="Yamada K."/>
            <person name="Lim J."/>
            <person name="Dale J.M."/>
            <person name="Chen H."/>
            <person name="Shinn P."/>
            <person name="Palm C.J."/>
            <person name="Southwick A.M."/>
            <person name="Wu H.C."/>
            <person name="Kim C.J."/>
            <person name="Nguyen M."/>
            <person name="Pham P.K."/>
            <person name="Cheuk R.F."/>
            <person name="Karlin-Newmann G."/>
            <person name="Liu S.X."/>
            <person name="Lam B."/>
            <person name="Sakano H."/>
            <person name="Wu T."/>
            <person name="Yu G."/>
            <person name="Miranda M."/>
            <person name="Quach H.L."/>
            <person name="Tripp M."/>
            <person name="Chang C.H."/>
            <person name="Lee J.M."/>
            <person name="Toriumi M.J."/>
            <person name="Chan M.M."/>
            <person name="Tang C.C."/>
            <person name="Onodera C.S."/>
            <person name="Deng J.M."/>
            <person name="Akiyama K."/>
            <person name="Ansari Y."/>
            <person name="Arakawa T."/>
            <person name="Banh J."/>
            <person name="Banno F."/>
            <person name="Bowser L."/>
            <person name="Brooks S.Y."/>
            <person name="Carninci P."/>
            <person name="Chao Q."/>
            <person name="Choy N."/>
            <person name="Enju A."/>
            <person name="Goldsmith A.D."/>
            <person name="Gurjal M."/>
            <person name="Hansen N.F."/>
            <person name="Hayashizaki Y."/>
            <person name="Johnson-Hopson C."/>
            <person name="Hsuan V.W."/>
            <person name="Iida K."/>
            <person name="Karnes M."/>
            <person name="Khan S."/>
            <person name="Koesema E."/>
            <person name="Ishida J."/>
            <person name="Jiang P.X."/>
            <person name="Jones T."/>
            <person name="Kawai J."/>
            <person name="Kamiya A."/>
            <person name="Meyers C."/>
            <person name="Nakajima M."/>
            <person name="Narusaka M."/>
            <person name="Seki M."/>
            <person name="Sakurai T."/>
            <person name="Satou M."/>
            <person name="Tamse R."/>
            <person name="Vaysberg M."/>
            <person name="Wallender E.K."/>
            <person name="Wong C."/>
            <person name="Yamamura Y."/>
            <person name="Yuan S."/>
            <person name="Shinozaki K."/>
            <person name="Davis R.W."/>
            <person name="Theologis A."/>
            <person name="Ecker J.R."/>
        </authorList>
    </citation>
    <scope>NUCLEOTIDE SEQUENCE [LARGE SCALE MRNA]</scope>
    <source>
        <strain>cv. Columbia</strain>
    </source>
</reference>
<reference key="5">
    <citation type="journal article" date="2004" name="Plant Biotechnol. J.">
        <title>DEAD-box RNA helicases in Arabidopsis thaliana: establishing a link between quantitative expression, gene structure and evolution of a family of genes.</title>
        <authorList>
            <person name="Mingam A."/>
            <person name="Toffano-Nioche C."/>
            <person name="Brunaud V."/>
            <person name="Boudet N."/>
            <person name="Kreis M."/>
            <person name="Lecharny A."/>
        </authorList>
    </citation>
    <scope>GENE FAMILY</scope>
    <scope>NOMENCLATURE</scope>
</reference>
<reference key="6">
    <citation type="journal article" date="2013" name="PLoS ONE">
        <title>Genome-wide comparative in silico analysis of the RNA helicase gene family in Zea mays and Glycine max: a comparison with Arabidopsis and Oryza sativa.</title>
        <authorList>
            <person name="Xu R."/>
            <person name="Zhang S."/>
            <person name="Huang J."/>
            <person name="Zheng C."/>
        </authorList>
    </citation>
    <scope>GENE FAMILY</scope>
</reference>
<gene>
    <name type="primary">RH50</name>
    <name type="synonym">HEL</name>
    <name type="ordered locus">At3g06980</name>
    <name type="ORF">F17A9.13</name>
</gene>
<sequence>MLARAPPPYFNFPARNNTICNRNEIVRLFRNGGGVVARGAGFTRRPLETSSSYDDSTDDGFVIISAADKENEFAPPPSSDLLSSIPSESARRNGSRSRGLTASFGRLKAQKVKALVGKVTQKKQHMSHNEEEDEDDASDENYSADEGFGSSSILDLMRKKLAMKAIPRSGKSAERNEVKRASKVRESRESRRDLDRLEGDDEDVDEVSNPDRFTDNQRAGSRSSYSKGGYAANSRGKGDRLSVARDLDSFEGHGRAIDEVSNPRKFNDNERAESRSSYSRDSSANSRGREDRRFVAKELDTFQGRDKAYDEVYNPRRFTDNERGLRGGSHSKGSDTNSRGWGDRRSVVYTRDMDDWRERNKTKDTRETGFFSRKTFAEIGCSEDMMKALKEQNFDRPAHIQAMAFSPVIDGKSCIIADQSGSGKTLAYLVPVIQRLREEELQGHSKSSPGCPRVIVLVPTAELASQVLANCRSISKSGVPFRSMVVTGGFRQRTQLENLEQGVDVLIATPGRFTYLMNEGILGLSNLRCAILDEVDILFGDDEFEAALQNLINSSPVTAQYLFVTATLPLEIYNKLVEVFPDCEVVMGPRVHRVSNALEEFLVDCSGDDNAEKTPETAFQNKKTALLQIMEENPVSKTIIFCNKIETCRKVENIFKRVDRKERQLHVLPFHAALSQESRLTNMQEFTSSQPEENSLFLVCTDRASRGIDFSGVDHVVLFDFPRDPSEYVRRVGRTARGARGKGKAFIFVVGKQVGLARRIIERNEKGHPVHDVPNAYEFTT</sequence>
<accession>Q8GUG7</accession>
<accession>Q9M901</accession>
<keyword id="KW-0067">ATP-binding</keyword>
<keyword id="KW-0347">Helicase</keyword>
<keyword id="KW-0378">Hydrolase</keyword>
<keyword id="KW-0547">Nucleotide-binding</keyword>
<keyword id="KW-0611">Plant defense</keyword>
<keyword id="KW-1185">Reference proteome</keyword>
<keyword id="KW-0694">RNA-binding</keyword>
<feature type="chain" id="PRO_0000239190" description="DEAD-box ATP-dependent RNA helicase 50">
    <location>
        <begin position="1"/>
        <end position="781"/>
    </location>
</feature>
<feature type="domain" description="Helicase ATP-binding" evidence="2">
    <location>
        <begin position="405"/>
        <end position="586"/>
    </location>
</feature>
<feature type="domain" description="Helicase C-terminal" evidence="3">
    <location>
        <begin position="621"/>
        <end position="781"/>
    </location>
</feature>
<feature type="region of interest" description="Disordered" evidence="4">
    <location>
        <begin position="72"/>
        <end position="103"/>
    </location>
</feature>
<feature type="region of interest" description="Disordered" evidence="4">
    <location>
        <begin position="117"/>
        <end position="148"/>
    </location>
</feature>
<feature type="region of interest" description="Disordered" evidence="4">
    <location>
        <begin position="166"/>
        <end position="240"/>
    </location>
</feature>
<feature type="region of interest" description="Disordered" evidence="4">
    <location>
        <begin position="254"/>
        <end position="292"/>
    </location>
</feature>
<feature type="region of interest" description="Disordered" evidence="4">
    <location>
        <begin position="313"/>
        <end position="342"/>
    </location>
</feature>
<feature type="short sequence motif" description="Q motif">
    <location>
        <begin position="374"/>
        <end position="402"/>
    </location>
</feature>
<feature type="short sequence motif" description="DEAD box">
    <location>
        <begin position="533"/>
        <end position="536"/>
    </location>
</feature>
<feature type="compositionally biased region" description="Low complexity" evidence="4">
    <location>
        <begin position="79"/>
        <end position="88"/>
    </location>
</feature>
<feature type="compositionally biased region" description="Acidic residues" evidence="4">
    <location>
        <begin position="130"/>
        <end position="143"/>
    </location>
</feature>
<feature type="compositionally biased region" description="Basic and acidic residues" evidence="4">
    <location>
        <begin position="171"/>
        <end position="197"/>
    </location>
</feature>
<feature type="compositionally biased region" description="Acidic residues" evidence="4">
    <location>
        <begin position="198"/>
        <end position="208"/>
    </location>
</feature>
<feature type="compositionally biased region" description="Polar residues" evidence="4">
    <location>
        <begin position="216"/>
        <end position="226"/>
    </location>
</feature>
<feature type="compositionally biased region" description="Basic and acidic residues" evidence="4">
    <location>
        <begin position="254"/>
        <end position="274"/>
    </location>
</feature>
<feature type="compositionally biased region" description="Low complexity" evidence="4">
    <location>
        <begin position="275"/>
        <end position="286"/>
    </location>
</feature>
<feature type="compositionally biased region" description="Basic and acidic residues" evidence="4">
    <location>
        <begin position="313"/>
        <end position="325"/>
    </location>
</feature>
<feature type="binding site" evidence="2">
    <location>
        <begin position="418"/>
        <end position="425"/>
    </location>
    <ligand>
        <name>ATP</name>
        <dbReference type="ChEBI" id="CHEBI:30616"/>
    </ligand>
</feature>
<feature type="sequence conflict" description="In Ref. 4; AAO00880." evidence="5" ref="4">
    <original>C</original>
    <variation>F</variation>
    <location>
        <position position="529"/>
    </location>
</feature>
<protein>
    <recommendedName>
        <fullName>DEAD-box ATP-dependent RNA helicase 50</fullName>
        <ecNumber>3.6.4.13</ecNumber>
    </recommendedName>
</protein>